<feature type="chain" id="PRO_0000364105" description="Sodium/proline symporter">
    <location>
        <begin position="1"/>
        <end position="512"/>
    </location>
</feature>
<feature type="transmembrane region" description="Helical" evidence="3">
    <location>
        <begin position="16"/>
        <end position="36"/>
    </location>
</feature>
<feature type="transmembrane region" description="Helical" evidence="3">
    <location>
        <begin position="54"/>
        <end position="74"/>
    </location>
</feature>
<feature type="transmembrane region" description="Helical" evidence="3">
    <location>
        <begin position="85"/>
        <end position="105"/>
    </location>
</feature>
<feature type="transmembrane region" description="Helical" evidence="3">
    <location>
        <begin position="139"/>
        <end position="159"/>
    </location>
</feature>
<feature type="transmembrane region" description="Helical" evidence="3">
    <location>
        <begin position="174"/>
        <end position="194"/>
    </location>
</feature>
<feature type="transmembrane region" description="Helical" evidence="3">
    <location>
        <begin position="200"/>
        <end position="220"/>
    </location>
</feature>
<feature type="transmembrane region" description="Helical" evidence="3">
    <location>
        <begin position="247"/>
        <end position="267"/>
    </location>
</feature>
<feature type="transmembrane region" description="Helical" evidence="3">
    <location>
        <begin position="286"/>
        <end position="306"/>
    </location>
</feature>
<feature type="transmembrane region" description="Helical" evidence="3">
    <location>
        <begin position="327"/>
        <end position="347"/>
    </location>
</feature>
<feature type="transmembrane region" description="Helical" evidence="3">
    <location>
        <begin position="381"/>
        <end position="401"/>
    </location>
</feature>
<feature type="transmembrane region" description="Helical" evidence="3">
    <location>
        <begin position="410"/>
        <end position="430"/>
    </location>
</feature>
<feature type="transmembrane region" description="Helical" evidence="3">
    <location>
        <begin position="438"/>
        <end position="458"/>
    </location>
</feature>
<feature type="transmembrane region" description="Helical" evidence="3">
    <location>
        <begin position="467"/>
        <end position="487"/>
    </location>
</feature>
<proteinExistence type="inferred from homology"/>
<keyword id="KW-0029">Amino-acid transport</keyword>
<keyword id="KW-1003">Cell membrane</keyword>
<keyword id="KW-0406">Ion transport</keyword>
<keyword id="KW-0472">Membrane</keyword>
<keyword id="KW-0915">Sodium</keyword>
<keyword id="KW-0739">Sodium transport</keyword>
<keyword id="KW-0769">Symport</keyword>
<keyword id="KW-0812">Transmembrane</keyword>
<keyword id="KW-1133">Transmembrane helix</keyword>
<keyword id="KW-0813">Transport</keyword>
<gene>
    <name type="primary">putP</name>
    <name type="ordered locus">SAUSA300_1883</name>
</gene>
<sequence>MLTMGTALSQQVDANWQTYIMIAVYFLILIVIGFYGYKQATGNLSEYMLGGRSIGPYITALSAGASDMSGWMIMGLPGSVYSTGLSAMWITIGLTLGAYINYFVVAPRLRVYTELAGDAITLPDFFKNRLNDKNNVLKIISGLIIVVFFTLYTHSGFVSGGKLFESAFGLDYHFGLILVAFIVIFYTFFGGYLAVSITDFFQGVIMLIAMVMVPIVAMMNLNGWGTFHDVAAMKPTNLNLFKGLSFIGIISLFSWGLGYFGQPHIIIRFMSIKSHKMLPKARRLGISWMAVGLLGAVAVGLTGIAFVPAYHIKLEDPETLFIVMSQVLFHPLVGGFLLAAILAAIMSTISSQLLVTSSSLTEDFYKLIRGEEKAKTHQKEFVMIGRLSVLVVAIVAIAIAWNPNDTILNLVGNAWAGFGASFSPLVLFALYWKGLTRAGAVSGMVSGALVVIVWIAWIKPLAHINEIFGLYEIIPGFIVSVIVTYVVSKLTKKPGAFVETDLNKVRDIVREK</sequence>
<comment type="function">
    <text evidence="1 2">Catalyzes the sodium-dependent uptake of extracellular L-proline (By similarity). Since most S.aureus strains are L-proline auxotrophs, this transporter may aid the bacterial persistence during an infection of tissues with low proline concentrations (By similarity).</text>
</comment>
<comment type="catalytic activity">
    <reaction evidence="1">
        <text>L-proline(in) + Na(+)(in) = L-proline(out) + Na(+)(out)</text>
        <dbReference type="Rhea" id="RHEA:28967"/>
        <dbReference type="ChEBI" id="CHEBI:29101"/>
        <dbReference type="ChEBI" id="CHEBI:60039"/>
    </reaction>
</comment>
<comment type="subcellular location">
    <subcellularLocation>
        <location evidence="4">Cell membrane</location>
        <topology evidence="3">Multi-pass membrane protein</topology>
    </subcellularLocation>
</comment>
<comment type="similarity">
    <text evidence="4">Belongs to the sodium:solute symporter (SSF) (TC 2.A.21) family.</text>
</comment>
<name>PUTP_STAA3</name>
<protein>
    <recommendedName>
        <fullName>Sodium/proline symporter</fullName>
    </recommendedName>
    <alternativeName>
        <fullName>Proline permease</fullName>
    </alternativeName>
</protein>
<reference key="1">
    <citation type="journal article" date="2006" name="Lancet">
        <title>Complete genome sequence of USA300, an epidemic clone of community-acquired meticillin-resistant Staphylococcus aureus.</title>
        <authorList>
            <person name="Diep B.A."/>
            <person name="Gill S.R."/>
            <person name="Chang R.F."/>
            <person name="Phan T.H."/>
            <person name="Chen J.H."/>
            <person name="Davidson M.G."/>
            <person name="Lin F."/>
            <person name="Lin J."/>
            <person name="Carleton H.A."/>
            <person name="Mongodin E.F."/>
            <person name="Sensabaugh G.F."/>
            <person name="Perdreau-Remington F."/>
        </authorList>
    </citation>
    <scope>NUCLEOTIDE SEQUENCE [LARGE SCALE GENOMIC DNA]</scope>
    <source>
        <strain>USA300</strain>
    </source>
</reference>
<evidence type="ECO:0000250" key="1">
    <source>
        <dbReference type="UniProtKB" id="P07117"/>
    </source>
</evidence>
<evidence type="ECO:0000250" key="2">
    <source>
        <dbReference type="UniProtKB" id="Q2FWY7"/>
    </source>
</evidence>
<evidence type="ECO:0000255" key="3"/>
<evidence type="ECO:0000305" key="4"/>
<accession>Q2FFJ3</accession>
<dbReference type="EMBL" id="CP000255">
    <property type="protein sequence ID" value="ABD20504.1"/>
    <property type="molecule type" value="Genomic_DNA"/>
</dbReference>
<dbReference type="RefSeq" id="WP_000957015.1">
    <property type="nucleotide sequence ID" value="NZ_CP027476.1"/>
</dbReference>
<dbReference type="SMR" id="Q2FFJ3"/>
<dbReference type="KEGG" id="saa:SAUSA300_1883"/>
<dbReference type="HOGENOM" id="CLU_018808_15_2_9"/>
<dbReference type="OMA" id="NWVFVAK"/>
<dbReference type="Proteomes" id="UP000001939">
    <property type="component" value="Chromosome"/>
</dbReference>
<dbReference type="GO" id="GO:0005886">
    <property type="term" value="C:plasma membrane"/>
    <property type="evidence" value="ECO:0007669"/>
    <property type="project" value="UniProtKB-SubCell"/>
</dbReference>
<dbReference type="GO" id="GO:0015193">
    <property type="term" value="F:L-proline transmembrane transporter activity"/>
    <property type="evidence" value="ECO:0007669"/>
    <property type="project" value="TreeGrafter"/>
</dbReference>
<dbReference type="GO" id="GO:0005298">
    <property type="term" value="F:proline:sodium symporter activity"/>
    <property type="evidence" value="ECO:0007669"/>
    <property type="project" value="InterPro"/>
</dbReference>
<dbReference type="GO" id="GO:0031402">
    <property type="term" value="F:sodium ion binding"/>
    <property type="evidence" value="ECO:0007669"/>
    <property type="project" value="InterPro"/>
</dbReference>
<dbReference type="GO" id="GO:0015824">
    <property type="term" value="P:proline transport"/>
    <property type="evidence" value="ECO:0007669"/>
    <property type="project" value="InterPro"/>
</dbReference>
<dbReference type="CDD" id="cd11475">
    <property type="entry name" value="SLC5sbd_PutP"/>
    <property type="match status" value="1"/>
</dbReference>
<dbReference type="FunFam" id="1.20.1730.10:FF:000002">
    <property type="entry name" value="Sodium/proline symporter"/>
    <property type="match status" value="1"/>
</dbReference>
<dbReference type="Gene3D" id="1.20.1730.10">
    <property type="entry name" value="Sodium/glucose cotransporter"/>
    <property type="match status" value="1"/>
</dbReference>
<dbReference type="InterPro" id="IPR038377">
    <property type="entry name" value="Na/Glc_symporter_sf"/>
</dbReference>
<dbReference type="InterPro" id="IPR011851">
    <property type="entry name" value="Na/Pro_symporter"/>
</dbReference>
<dbReference type="InterPro" id="IPR001734">
    <property type="entry name" value="Na/solute_symporter"/>
</dbReference>
<dbReference type="InterPro" id="IPR050277">
    <property type="entry name" value="Sodium:Solute_Symporter"/>
</dbReference>
<dbReference type="NCBIfam" id="TIGR02121">
    <property type="entry name" value="Na_Pro_sym"/>
    <property type="match status" value="1"/>
</dbReference>
<dbReference type="NCBIfam" id="TIGR00813">
    <property type="entry name" value="sss"/>
    <property type="match status" value="1"/>
</dbReference>
<dbReference type="PANTHER" id="PTHR48086">
    <property type="entry name" value="SODIUM/PROLINE SYMPORTER-RELATED"/>
    <property type="match status" value="1"/>
</dbReference>
<dbReference type="PANTHER" id="PTHR48086:SF3">
    <property type="entry name" value="SODIUM_PROLINE SYMPORTER"/>
    <property type="match status" value="1"/>
</dbReference>
<dbReference type="Pfam" id="PF00474">
    <property type="entry name" value="SSF"/>
    <property type="match status" value="1"/>
</dbReference>
<dbReference type="PROSITE" id="PS50283">
    <property type="entry name" value="NA_SOLUT_SYMP_3"/>
    <property type="match status" value="1"/>
</dbReference>
<organism>
    <name type="scientific">Staphylococcus aureus (strain USA300)</name>
    <dbReference type="NCBI Taxonomy" id="367830"/>
    <lineage>
        <taxon>Bacteria</taxon>
        <taxon>Bacillati</taxon>
        <taxon>Bacillota</taxon>
        <taxon>Bacilli</taxon>
        <taxon>Bacillales</taxon>
        <taxon>Staphylococcaceae</taxon>
        <taxon>Staphylococcus</taxon>
    </lineage>
</organism>